<name>CHS1_YEAST</name>
<comment type="function">
    <text evidence="3 4">Polymerizes chitin, a structural polymer of the cell wall and septum, by transferring the sugar moiety of UDP-GlcNAc to the non-reducing end of the growing chitin polymer (PubMed:2941152). Required for mitotic division septum formation during adverse conditions (PubMed:2523889).</text>
</comment>
<comment type="catalytic activity">
    <reaction>
        <text>[(1-&gt;4)-N-acetyl-beta-D-glucosaminyl](n) + UDP-N-acetyl-alpha-D-glucosamine = [(1-&gt;4)-N-acetyl-beta-D-glucosaminyl](n+1) + UDP + H(+)</text>
        <dbReference type="Rhea" id="RHEA:16637"/>
        <dbReference type="Rhea" id="RHEA-COMP:9593"/>
        <dbReference type="Rhea" id="RHEA-COMP:9595"/>
        <dbReference type="ChEBI" id="CHEBI:15378"/>
        <dbReference type="ChEBI" id="CHEBI:17029"/>
        <dbReference type="ChEBI" id="CHEBI:57705"/>
        <dbReference type="ChEBI" id="CHEBI:58223"/>
        <dbReference type="EC" id="2.4.1.16"/>
    </reaction>
</comment>
<comment type="activity regulation">
    <text>Requires proteolytic activation.</text>
</comment>
<comment type="subcellular location">
    <subcellularLocation>
        <location evidence="6">Cell membrane</location>
        <topology evidence="1">Multi-pass membrane protein</topology>
    </subcellularLocation>
</comment>
<comment type="disruption phenotype">
    <text evidence="3">Cell lysis during cytokinesis.</text>
</comment>
<comment type="similarity">
    <text evidence="5">Belongs to the chitin synthase family.</text>
</comment>
<feature type="chain" id="PRO_0000193727" description="Chitin synthase 1">
    <location>
        <begin position="1"/>
        <end position="1131"/>
    </location>
</feature>
<feature type="transmembrane region" description="Helical" evidence="1">
    <location>
        <begin position="795"/>
        <end position="815"/>
    </location>
</feature>
<feature type="transmembrane region" description="Helical" evidence="1">
    <location>
        <begin position="833"/>
        <end position="853"/>
    </location>
</feature>
<feature type="transmembrane region" description="Helical" evidence="1">
    <location>
        <begin position="866"/>
        <end position="886"/>
    </location>
</feature>
<feature type="transmembrane region" description="Helical" evidence="1">
    <location>
        <begin position="914"/>
        <end position="934"/>
    </location>
</feature>
<feature type="transmembrane region" description="Helical" evidence="1">
    <location>
        <begin position="942"/>
        <end position="962"/>
    </location>
</feature>
<feature type="transmembrane region" description="Helical" evidence="1">
    <location>
        <begin position="1042"/>
        <end position="1062"/>
    </location>
</feature>
<feature type="transmembrane region" description="Helical" evidence="1">
    <location>
        <begin position="1101"/>
        <end position="1121"/>
    </location>
</feature>
<feature type="region of interest" description="Disordered" evidence="2">
    <location>
        <begin position="1"/>
        <end position="22"/>
    </location>
</feature>
<feature type="region of interest" description="Disordered" evidence="2">
    <location>
        <begin position="282"/>
        <end position="305"/>
    </location>
</feature>
<feature type="compositionally biased region" description="Basic and acidic residues" evidence="2">
    <location>
        <begin position="1"/>
        <end position="20"/>
    </location>
</feature>
<feature type="modified residue" description="Phosphoserine" evidence="7 9">
    <location>
        <position position="34"/>
    </location>
</feature>
<feature type="modified residue" description="Phosphoserine" evidence="9">
    <location>
        <position position="35"/>
    </location>
</feature>
<feature type="modified residue" description="Phosphoserine" evidence="7 8 9">
    <location>
        <position position="270"/>
    </location>
</feature>
<feature type="modified residue" description="Phosphoserine" evidence="7">
    <location>
        <position position="299"/>
    </location>
</feature>
<feature type="modified residue" description="Phosphoserine" evidence="7">
    <location>
        <position position="318"/>
    </location>
</feature>
<feature type="modified residue" description="Phosphothreonine" evidence="7">
    <location>
        <position position="328"/>
    </location>
</feature>
<feature type="modified residue" description="Phosphoserine" evidence="8">
    <location>
        <position position="358"/>
    </location>
</feature>
<feature type="sequence conflict" description="In Ref. 1; AAA34491 and 2; CAA96086." evidence="5" ref="1 2">
    <original>V</original>
    <variation>F</variation>
    <location>
        <position position="815"/>
    </location>
</feature>
<feature type="strand" evidence="12">
    <location>
        <begin position="257"/>
        <end position="260"/>
    </location>
</feature>
<feature type="strand" evidence="10">
    <location>
        <begin position="381"/>
        <end position="383"/>
    </location>
</feature>
<feature type="strand" evidence="12">
    <location>
        <begin position="386"/>
        <end position="390"/>
    </location>
</feature>
<feature type="helix" evidence="12">
    <location>
        <begin position="393"/>
        <end position="400"/>
    </location>
</feature>
<feature type="strand" evidence="11">
    <location>
        <begin position="403"/>
        <end position="405"/>
    </location>
</feature>
<feature type="helix" evidence="12">
    <location>
        <begin position="411"/>
        <end position="414"/>
    </location>
</feature>
<feature type="strand" evidence="12">
    <location>
        <begin position="415"/>
        <end position="421"/>
    </location>
</feature>
<feature type="helix" evidence="12">
    <location>
        <begin position="425"/>
        <end position="427"/>
    </location>
</feature>
<feature type="turn" evidence="12">
    <location>
        <begin position="428"/>
        <end position="432"/>
    </location>
</feature>
<feature type="helix" evidence="12">
    <location>
        <begin position="436"/>
        <end position="438"/>
    </location>
</feature>
<feature type="strand" evidence="12">
    <location>
        <begin position="439"/>
        <end position="442"/>
    </location>
</feature>
<feature type="strand" evidence="12">
    <location>
        <begin position="447"/>
        <end position="456"/>
    </location>
</feature>
<feature type="helix" evidence="12">
    <location>
        <begin position="459"/>
        <end position="477"/>
    </location>
</feature>
<feature type="helix" evidence="12">
    <location>
        <begin position="489"/>
        <end position="492"/>
    </location>
</feature>
<feature type="strand" evidence="12">
    <location>
        <begin position="493"/>
        <end position="499"/>
    </location>
</feature>
<feature type="turn" evidence="12">
    <location>
        <begin position="502"/>
        <end position="504"/>
    </location>
</feature>
<feature type="helix" evidence="12">
    <location>
        <begin position="507"/>
        <end position="516"/>
    </location>
</feature>
<feature type="strand" evidence="12">
    <location>
        <begin position="526"/>
        <end position="528"/>
    </location>
</feature>
<feature type="strand" evidence="12">
    <location>
        <begin position="535"/>
        <end position="542"/>
    </location>
</feature>
<feature type="strand" evidence="12">
    <location>
        <begin position="545"/>
        <end position="549"/>
    </location>
</feature>
<feature type="strand" evidence="12">
    <location>
        <begin position="554"/>
        <end position="557"/>
    </location>
</feature>
<feature type="strand" evidence="15">
    <location>
        <begin position="559"/>
        <end position="561"/>
    </location>
</feature>
<feature type="strand" evidence="12">
    <location>
        <begin position="565"/>
        <end position="574"/>
    </location>
</feature>
<feature type="helix" evidence="12">
    <location>
        <begin position="578"/>
        <end position="587"/>
    </location>
</feature>
<feature type="helix" evidence="12">
    <location>
        <begin position="589"/>
        <end position="593"/>
    </location>
</feature>
<feature type="strand" evidence="12">
    <location>
        <begin position="596"/>
        <end position="602"/>
    </location>
</feature>
<feature type="strand" evidence="13">
    <location>
        <begin position="605"/>
        <end position="607"/>
    </location>
</feature>
<feature type="helix" evidence="12">
    <location>
        <begin position="611"/>
        <end position="616"/>
    </location>
</feature>
<feature type="helix" evidence="12">
    <location>
        <begin position="617"/>
        <end position="620"/>
    </location>
</feature>
<feature type="strand" evidence="12">
    <location>
        <begin position="624"/>
        <end position="633"/>
    </location>
</feature>
<feature type="helix" evidence="12">
    <location>
        <begin position="637"/>
        <end position="643"/>
    </location>
</feature>
<feature type="helix" evidence="12">
    <location>
        <begin position="645"/>
        <end position="659"/>
    </location>
</feature>
<feature type="helix" evidence="12">
    <location>
        <begin position="661"/>
        <end position="668"/>
    </location>
</feature>
<feature type="strand" evidence="12">
    <location>
        <begin position="675"/>
        <end position="677"/>
    </location>
</feature>
<feature type="strand" evidence="12">
    <location>
        <begin position="679"/>
        <end position="682"/>
    </location>
</feature>
<feature type="helix" evidence="12">
    <location>
        <begin position="683"/>
        <end position="686"/>
    </location>
</feature>
<feature type="helix" evidence="12">
    <location>
        <begin position="689"/>
        <end position="695"/>
    </location>
</feature>
<feature type="helix" evidence="12">
    <location>
        <begin position="707"/>
        <end position="711"/>
    </location>
</feature>
<feature type="helix" evidence="12">
    <location>
        <begin position="712"/>
        <end position="715"/>
    </location>
</feature>
<feature type="helix" evidence="12">
    <location>
        <begin position="718"/>
        <end position="725"/>
    </location>
</feature>
<feature type="strand" evidence="12">
    <location>
        <begin position="733"/>
        <end position="744"/>
    </location>
</feature>
<feature type="helix" evidence="12">
    <location>
        <begin position="750"/>
        <end position="773"/>
    </location>
</feature>
<feature type="helix" evidence="12">
    <location>
        <begin position="775"/>
        <end position="780"/>
    </location>
</feature>
<feature type="helix" evidence="12">
    <location>
        <begin position="785"/>
        <end position="806"/>
    </location>
</feature>
<feature type="helix" evidence="12">
    <location>
        <begin position="808"/>
        <end position="827"/>
    </location>
</feature>
<feature type="helix" evidence="12">
    <location>
        <begin position="831"/>
        <end position="855"/>
    </location>
</feature>
<feature type="turn" evidence="12">
    <location>
        <begin position="858"/>
        <end position="860"/>
    </location>
</feature>
<feature type="helix" evidence="12">
    <location>
        <begin position="862"/>
        <end position="891"/>
    </location>
</feature>
<feature type="helix" evidence="12">
    <location>
        <begin position="909"/>
        <end position="931"/>
    </location>
</feature>
<feature type="helix" evidence="12">
    <location>
        <begin position="937"/>
        <end position="940"/>
    </location>
</feature>
<feature type="helix" evidence="12">
    <location>
        <begin position="942"/>
        <end position="954"/>
    </location>
</feature>
<feature type="helix" evidence="12">
    <location>
        <begin position="956"/>
        <end position="962"/>
    </location>
</feature>
<feature type="strand" evidence="10">
    <location>
        <begin position="963"/>
        <end position="965"/>
    </location>
</feature>
<feature type="strand" evidence="14">
    <location>
        <begin position="985"/>
        <end position="987"/>
    </location>
</feature>
<feature type="turn" evidence="14">
    <location>
        <begin position="994"/>
        <end position="996"/>
    </location>
</feature>
<feature type="helix" evidence="12">
    <location>
        <begin position="998"/>
        <end position="1011"/>
    </location>
</feature>
<feature type="helix" evidence="12">
    <location>
        <begin position="1028"/>
        <end position="1059"/>
    </location>
</feature>
<feature type="turn" evidence="12">
    <location>
        <begin position="1061"/>
        <end position="1063"/>
    </location>
</feature>
<feature type="helix" evidence="12">
    <location>
        <begin position="1064"/>
        <end position="1074"/>
    </location>
</feature>
<feature type="strand" evidence="10">
    <location>
        <begin position="1086"/>
        <end position="1090"/>
    </location>
</feature>
<feature type="helix" evidence="12">
    <location>
        <begin position="1092"/>
        <end position="1124"/>
    </location>
</feature>
<gene>
    <name type="primary">CHS1</name>
    <name type="ordered locus">YNL192W</name>
    <name type="ORF">N1404</name>
</gene>
<evidence type="ECO:0000255" key="1"/>
<evidence type="ECO:0000256" key="2">
    <source>
        <dbReference type="SAM" id="MobiDB-lite"/>
    </source>
</evidence>
<evidence type="ECO:0000269" key="3">
    <source>
    </source>
</evidence>
<evidence type="ECO:0000269" key="4">
    <source>
    </source>
</evidence>
<evidence type="ECO:0000305" key="5"/>
<evidence type="ECO:0000305" key="6">
    <source>
    </source>
</evidence>
<evidence type="ECO:0007744" key="7">
    <source>
    </source>
</evidence>
<evidence type="ECO:0007744" key="8">
    <source>
    </source>
</evidence>
<evidence type="ECO:0007744" key="9">
    <source>
    </source>
</evidence>
<evidence type="ECO:0007829" key="10">
    <source>
        <dbReference type="PDB" id="7XS6"/>
    </source>
</evidence>
<evidence type="ECO:0007829" key="11">
    <source>
        <dbReference type="PDB" id="7XS7"/>
    </source>
</evidence>
<evidence type="ECO:0007829" key="12">
    <source>
        <dbReference type="PDB" id="8K3Q"/>
    </source>
</evidence>
<evidence type="ECO:0007829" key="13">
    <source>
        <dbReference type="PDB" id="8K3U"/>
    </source>
</evidence>
<evidence type="ECO:0007829" key="14">
    <source>
        <dbReference type="PDB" id="8K3V"/>
    </source>
</evidence>
<evidence type="ECO:0007829" key="15">
    <source>
        <dbReference type="PDB" id="8K3X"/>
    </source>
</evidence>
<protein>
    <recommendedName>
        <fullName>Chitin synthase 1</fullName>
        <ecNumber>2.4.1.16</ecNumber>
    </recommendedName>
    <alternativeName>
        <fullName>Chitin-UDP acetyl-glucosaminyl transferase 1</fullName>
    </alternativeName>
</protein>
<accession>P08004</accession>
<accession>D6W0Z5</accession>
<reference key="1">
    <citation type="journal article" date="1986" name="Cell">
        <title>The S. cerevisiae structural gene for chitin synthase is not required for chitin synthesis in vivo.</title>
        <authorList>
            <person name="Bulawa C.E."/>
            <person name="Slater M."/>
            <person name="Cabib E."/>
            <person name="Au-Young J."/>
            <person name="Sburlati A."/>
            <person name="Adair W.L. Jr."/>
            <person name="Robbins P.W."/>
        </authorList>
    </citation>
    <scope>NUCLEOTIDE SEQUENCE [GENOMIC DNA]</scope>
    <scope>FUNCTION</scope>
</reference>
<reference key="2">
    <citation type="journal article" date="1997" name="Nature">
        <title>The nucleotide sequence of Saccharomyces cerevisiae chromosome XIV and its evolutionary implications.</title>
        <authorList>
            <person name="Philippsen P."/>
            <person name="Kleine K."/>
            <person name="Poehlmann R."/>
            <person name="Duesterhoeft A."/>
            <person name="Hamberg K."/>
            <person name="Hegemann J.H."/>
            <person name="Obermaier B."/>
            <person name="Urrestarazu L.A."/>
            <person name="Aert R."/>
            <person name="Albermann K."/>
            <person name="Altmann R."/>
            <person name="Andre B."/>
            <person name="Baladron V."/>
            <person name="Ballesta J.P.G."/>
            <person name="Becam A.-M."/>
            <person name="Beinhauer J.D."/>
            <person name="Boskovic J."/>
            <person name="Buitrago M.J."/>
            <person name="Bussereau F."/>
            <person name="Coster F."/>
            <person name="Crouzet M."/>
            <person name="D'Angelo M."/>
            <person name="Dal Pero F."/>
            <person name="De Antoni A."/>
            <person name="del Rey F."/>
            <person name="Doignon F."/>
            <person name="Domdey H."/>
            <person name="Dubois E."/>
            <person name="Fiedler T.A."/>
            <person name="Fleig U."/>
            <person name="Floeth M."/>
            <person name="Fritz C."/>
            <person name="Gaillardin C."/>
            <person name="Garcia-Cantalejo J.M."/>
            <person name="Glansdorff N."/>
            <person name="Goffeau A."/>
            <person name="Gueldener U."/>
            <person name="Herbert C.J."/>
            <person name="Heumann K."/>
            <person name="Heuss-Neitzel D."/>
            <person name="Hilbert H."/>
            <person name="Hinni K."/>
            <person name="Iraqui Houssaini I."/>
            <person name="Jacquet M."/>
            <person name="Jimenez A."/>
            <person name="Jonniaux J.-L."/>
            <person name="Karpfinger-Hartl L."/>
            <person name="Lanfranchi G."/>
            <person name="Lepingle A."/>
            <person name="Levesque H."/>
            <person name="Lyck R."/>
            <person name="Maftahi M."/>
            <person name="Mallet L."/>
            <person name="Maurer C.T.C."/>
            <person name="Messenguy F."/>
            <person name="Mewes H.-W."/>
            <person name="Moestl D."/>
            <person name="Nasr F."/>
            <person name="Nicaud J.-M."/>
            <person name="Niedenthal R.K."/>
            <person name="Pandolfo D."/>
            <person name="Pierard A."/>
            <person name="Piravandi E."/>
            <person name="Planta R.J."/>
            <person name="Pohl T.M."/>
            <person name="Purnelle B."/>
            <person name="Rebischung C."/>
            <person name="Remacha M.A."/>
            <person name="Revuelta J.L."/>
            <person name="Rinke M."/>
            <person name="Saiz J.E."/>
            <person name="Sartorello F."/>
            <person name="Scherens B."/>
            <person name="Sen-Gupta M."/>
            <person name="Soler-Mira A."/>
            <person name="Urbanus J.H.M."/>
            <person name="Valle G."/>
            <person name="Van Dyck L."/>
            <person name="Verhasselt P."/>
            <person name="Vierendeels F."/>
            <person name="Vissers S."/>
            <person name="Voet M."/>
            <person name="Volckaert G."/>
            <person name="Wach A."/>
            <person name="Wambutt R."/>
            <person name="Wedler H."/>
            <person name="Zollner A."/>
            <person name="Hani J."/>
        </authorList>
    </citation>
    <scope>NUCLEOTIDE SEQUENCE [LARGE SCALE GENOMIC DNA]</scope>
    <source>
        <strain>ATCC 204508 / S288c</strain>
    </source>
</reference>
<reference key="3">
    <citation type="journal article" date="2014" name="G3 (Bethesda)">
        <title>The reference genome sequence of Saccharomyces cerevisiae: Then and now.</title>
        <authorList>
            <person name="Engel S.R."/>
            <person name="Dietrich F.S."/>
            <person name="Fisk D.G."/>
            <person name="Binkley G."/>
            <person name="Balakrishnan R."/>
            <person name="Costanzo M.C."/>
            <person name="Dwight S.S."/>
            <person name="Hitz B.C."/>
            <person name="Karra K."/>
            <person name="Nash R.S."/>
            <person name="Weng S."/>
            <person name="Wong E.D."/>
            <person name="Lloyd P."/>
            <person name="Skrzypek M.S."/>
            <person name="Miyasato S.R."/>
            <person name="Simison M."/>
            <person name="Cherry J.M."/>
        </authorList>
    </citation>
    <scope>GENOME REANNOTATION</scope>
    <scope>SEQUENCE REVISION TO 815</scope>
    <source>
        <strain>ATCC 204508 / S288c</strain>
    </source>
</reference>
<reference key="4">
    <citation type="journal article" date="1989" name="J. Cell Biol.">
        <title>Chitin synthase 1, an auxiliary enzyme for chitin synthesis in Saccharomyces cerevisiae.</title>
        <authorList>
            <person name="Cabib E."/>
            <person name="Sburlati A."/>
            <person name="Bowers B."/>
            <person name="Silverman S.J."/>
        </authorList>
    </citation>
    <scope>FUNCTION</scope>
    <scope>SUBCELLULAR LOCATION</scope>
    <scope>DISRUPTION PHENOTYPE</scope>
</reference>
<reference key="5">
    <citation type="journal article" date="2007" name="J. Proteome Res.">
        <title>Large-scale phosphorylation analysis of alpha-factor-arrested Saccharomyces cerevisiae.</title>
        <authorList>
            <person name="Li X."/>
            <person name="Gerber S.A."/>
            <person name="Rudner A.D."/>
            <person name="Beausoleil S.A."/>
            <person name="Haas W."/>
            <person name="Villen J."/>
            <person name="Elias J.E."/>
            <person name="Gygi S.P."/>
        </authorList>
    </citation>
    <scope>PHOSPHORYLATION [LARGE SCALE ANALYSIS] AT SER-34; SER-270; SER-299; SER-318 AND THR-328</scope>
    <scope>IDENTIFICATION BY MASS SPECTROMETRY [LARGE SCALE ANALYSIS]</scope>
    <source>
        <strain>ADR376</strain>
    </source>
</reference>
<reference key="6">
    <citation type="journal article" date="2007" name="Proc. Natl. Acad. Sci. U.S.A.">
        <title>Analysis of phosphorylation sites on proteins from Saccharomyces cerevisiae by electron transfer dissociation (ETD) mass spectrometry.</title>
        <authorList>
            <person name="Chi A."/>
            <person name="Huttenhower C."/>
            <person name="Geer L.Y."/>
            <person name="Coon J.J."/>
            <person name="Syka J.E.P."/>
            <person name="Bai D.L."/>
            <person name="Shabanowitz J."/>
            <person name="Burke D.J."/>
            <person name="Troyanskaya O.G."/>
            <person name="Hunt D.F."/>
        </authorList>
    </citation>
    <scope>IDENTIFICATION BY MASS SPECTROMETRY [LARGE SCALE ANALYSIS]</scope>
</reference>
<reference key="7">
    <citation type="journal article" date="2008" name="Mol. Cell. Proteomics">
        <title>A multidimensional chromatography technology for in-depth phosphoproteome analysis.</title>
        <authorList>
            <person name="Albuquerque C.P."/>
            <person name="Smolka M.B."/>
            <person name="Payne S.H."/>
            <person name="Bafna V."/>
            <person name="Eng J."/>
            <person name="Zhou H."/>
        </authorList>
    </citation>
    <scope>PHOSPHORYLATION [LARGE SCALE ANALYSIS] AT SER-270 AND SER-358</scope>
    <scope>IDENTIFICATION BY MASS SPECTROMETRY [LARGE SCALE ANALYSIS]</scope>
</reference>
<reference key="8">
    <citation type="journal article" date="2009" name="Science">
        <title>Global analysis of Cdk1 substrate phosphorylation sites provides insights into evolution.</title>
        <authorList>
            <person name="Holt L.J."/>
            <person name="Tuch B.B."/>
            <person name="Villen J."/>
            <person name="Johnson A.D."/>
            <person name="Gygi S.P."/>
            <person name="Morgan D.O."/>
        </authorList>
    </citation>
    <scope>PHOSPHORYLATION [LARGE SCALE ANALYSIS] AT SER-34; SER-35 AND SER-270</scope>
    <scope>IDENTIFICATION BY MASS SPECTROMETRY [LARGE SCALE ANALYSIS]</scope>
</reference>
<organism>
    <name type="scientific">Saccharomyces cerevisiae (strain ATCC 204508 / S288c)</name>
    <name type="common">Baker's yeast</name>
    <dbReference type="NCBI Taxonomy" id="559292"/>
    <lineage>
        <taxon>Eukaryota</taxon>
        <taxon>Fungi</taxon>
        <taxon>Dikarya</taxon>
        <taxon>Ascomycota</taxon>
        <taxon>Saccharomycotina</taxon>
        <taxon>Saccharomycetes</taxon>
        <taxon>Saccharomycetales</taxon>
        <taxon>Saccharomycetaceae</taxon>
        <taxon>Saccharomyces</taxon>
    </lineage>
</organism>
<dbReference type="EC" id="2.4.1.16"/>
<dbReference type="EMBL" id="M14045">
    <property type="protein sequence ID" value="AAA34491.1"/>
    <property type="molecule type" value="Genomic_DNA"/>
</dbReference>
<dbReference type="EMBL" id="Z71468">
    <property type="protein sequence ID" value="CAA96086.1"/>
    <property type="molecule type" value="Genomic_DNA"/>
</dbReference>
<dbReference type="EMBL" id="BK006947">
    <property type="protein sequence ID" value="DAA10361.2"/>
    <property type="molecule type" value="Genomic_DNA"/>
</dbReference>
<dbReference type="PIR" id="A23944">
    <property type="entry name" value="A23944"/>
</dbReference>
<dbReference type="RefSeq" id="NP_014207.2">
    <property type="nucleotide sequence ID" value="NM_001183030.2"/>
</dbReference>
<dbReference type="PDB" id="7XS6">
    <property type="method" value="EM"/>
    <property type="resolution" value="2.90 A"/>
    <property type="chains" value="A/B=1-1131"/>
</dbReference>
<dbReference type="PDB" id="7XS7">
    <property type="method" value="EM"/>
    <property type="resolution" value="3.20 A"/>
    <property type="chains" value="A/B=1-1131"/>
</dbReference>
<dbReference type="PDB" id="8K3P">
    <property type="method" value="EM"/>
    <property type="resolution" value="3.64 A"/>
    <property type="chains" value="A/B=1-1131"/>
</dbReference>
<dbReference type="PDB" id="8K3Q">
    <property type="method" value="EM"/>
    <property type="resolution" value="2.60 A"/>
    <property type="chains" value="A/B=1-1131"/>
</dbReference>
<dbReference type="PDB" id="8K3R">
    <property type="method" value="EM"/>
    <property type="resolution" value="3.51 A"/>
    <property type="chains" value="A/B=1-1131"/>
</dbReference>
<dbReference type="PDB" id="8K3T">
    <property type="method" value="EM"/>
    <property type="resolution" value="3.57 A"/>
    <property type="chains" value="A/B=1-1131"/>
</dbReference>
<dbReference type="PDB" id="8K3U">
    <property type="method" value="EM"/>
    <property type="resolution" value="3.06 A"/>
    <property type="chains" value="A/B=1-1131"/>
</dbReference>
<dbReference type="PDB" id="8K3V">
    <property type="method" value="EM"/>
    <property type="resolution" value="3.10 A"/>
    <property type="chains" value="A/B=1-1131"/>
</dbReference>
<dbReference type="PDB" id="8K3W">
    <property type="method" value="EM"/>
    <property type="resolution" value="2.91 A"/>
    <property type="chains" value="A/B=1-1131"/>
</dbReference>
<dbReference type="PDB" id="8K3X">
    <property type="method" value="EM"/>
    <property type="resolution" value="2.86 A"/>
    <property type="chains" value="A/B=1-1131"/>
</dbReference>
<dbReference type="PDBsum" id="7XS6"/>
<dbReference type="PDBsum" id="7XS7"/>
<dbReference type="PDBsum" id="8K3P"/>
<dbReference type="PDBsum" id="8K3Q"/>
<dbReference type="PDBsum" id="8K3R"/>
<dbReference type="PDBsum" id="8K3T"/>
<dbReference type="PDBsum" id="8K3U"/>
<dbReference type="PDBsum" id="8K3V"/>
<dbReference type="PDBsum" id="8K3W"/>
<dbReference type="PDBsum" id="8K3X"/>
<dbReference type="EMDB" id="EMD-33422"/>
<dbReference type="EMDB" id="EMD-33423"/>
<dbReference type="EMDB" id="EMD-36855"/>
<dbReference type="EMDB" id="EMD-36856"/>
<dbReference type="EMDB" id="EMD-36857"/>
<dbReference type="EMDB" id="EMD-36859"/>
<dbReference type="EMDB" id="EMD-36861"/>
<dbReference type="EMDB" id="EMD-36862"/>
<dbReference type="EMDB" id="EMD-36863"/>
<dbReference type="EMDB" id="EMD-36864"/>
<dbReference type="SMR" id="P08004"/>
<dbReference type="BioGRID" id="35641">
    <property type="interactions" value="139"/>
</dbReference>
<dbReference type="DIP" id="DIP-4680N"/>
<dbReference type="FunCoup" id="P08004">
    <property type="interactions" value="158"/>
</dbReference>
<dbReference type="IntAct" id="P08004">
    <property type="interactions" value="9"/>
</dbReference>
<dbReference type="MINT" id="P08004"/>
<dbReference type="STRING" id="4932.YNL192W"/>
<dbReference type="BindingDB" id="P08004"/>
<dbReference type="ChEMBL" id="CHEMBL3827"/>
<dbReference type="CAZy" id="GT2">
    <property type="family name" value="Glycosyltransferase Family 2"/>
</dbReference>
<dbReference type="TCDB" id="4.D.1.1.17">
    <property type="family name" value="the putative vectorial glycosyl polymerization (vgp) family"/>
</dbReference>
<dbReference type="iPTMnet" id="P08004"/>
<dbReference type="PaxDb" id="4932-YNL192W"/>
<dbReference type="PeptideAtlas" id="P08004"/>
<dbReference type="EnsemblFungi" id="YNL192W_mRNA">
    <property type="protein sequence ID" value="YNL192W"/>
    <property type="gene ID" value="YNL192W"/>
</dbReference>
<dbReference type="GeneID" id="855529"/>
<dbReference type="KEGG" id="sce:YNL192W"/>
<dbReference type="AGR" id="SGD:S000005136"/>
<dbReference type="SGD" id="S000005136">
    <property type="gene designation" value="CHS1"/>
</dbReference>
<dbReference type="VEuPathDB" id="FungiDB:YNL192W"/>
<dbReference type="eggNOG" id="KOG2571">
    <property type="taxonomic scope" value="Eukaryota"/>
</dbReference>
<dbReference type="HOGENOM" id="CLU_004760_3_1_1"/>
<dbReference type="InParanoid" id="P08004"/>
<dbReference type="OMA" id="NTIMSWF"/>
<dbReference type="OrthoDB" id="26569at2759"/>
<dbReference type="BioCyc" id="YEAST:YNL192W-MONOMER"/>
<dbReference type="BioGRID-ORCS" id="855529">
    <property type="hits" value="1 hit in 10 CRISPR screens"/>
</dbReference>
<dbReference type="PRO" id="PR:P08004"/>
<dbReference type="Proteomes" id="UP000002311">
    <property type="component" value="Chromosome XIV"/>
</dbReference>
<dbReference type="RNAct" id="P08004">
    <property type="molecule type" value="protein"/>
</dbReference>
<dbReference type="GO" id="GO:0071944">
    <property type="term" value="C:cell periphery"/>
    <property type="evidence" value="ECO:0007005"/>
    <property type="project" value="SGD"/>
</dbReference>
<dbReference type="GO" id="GO:0030428">
    <property type="term" value="C:cell septum"/>
    <property type="evidence" value="ECO:0000318"/>
    <property type="project" value="GO_Central"/>
</dbReference>
<dbReference type="GO" id="GO:0045009">
    <property type="term" value="C:chitosome"/>
    <property type="evidence" value="ECO:0000314"/>
    <property type="project" value="SGD"/>
</dbReference>
<dbReference type="GO" id="GO:0005886">
    <property type="term" value="C:plasma membrane"/>
    <property type="evidence" value="ECO:0000314"/>
    <property type="project" value="SGD"/>
</dbReference>
<dbReference type="GO" id="GO:0004100">
    <property type="term" value="F:chitin synthase activity"/>
    <property type="evidence" value="ECO:0000314"/>
    <property type="project" value="SGD"/>
</dbReference>
<dbReference type="GO" id="GO:0071555">
    <property type="term" value="P:cell wall organization"/>
    <property type="evidence" value="ECO:0007669"/>
    <property type="project" value="UniProtKB-KW"/>
</dbReference>
<dbReference type="GO" id="GO:0006031">
    <property type="term" value="P:chitin biosynthetic process"/>
    <property type="evidence" value="ECO:0000318"/>
    <property type="project" value="GO_Central"/>
</dbReference>
<dbReference type="GO" id="GO:0000920">
    <property type="term" value="P:septum digestion after cytokinesis"/>
    <property type="evidence" value="ECO:0000315"/>
    <property type="project" value="SGD"/>
</dbReference>
<dbReference type="CDD" id="cd04190">
    <property type="entry name" value="Chitin_synth_C"/>
    <property type="match status" value="1"/>
</dbReference>
<dbReference type="InterPro" id="IPR004835">
    <property type="entry name" value="Chitin_synth"/>
</dbReference>
<dbReference type="InterPro" id="IPR004834">
    <property type="entry name" value="Chitin_synth_fun"/>
</dbReference>
<dbReference type="InterPro" id="IPR013616">
    <property type="entry name" value="Chitin_synth_N"/>
</dbReference>
<dbReference type="InterPro" id="IPR029044">
    <property type="entry name" value="Nucleotide-diphossugar_trans"/>
</dbReference>
<dbReference type="PANTHER" id="PTHR22914">
    <property type="entry name" value="CHITIN SYNTHASE"/>
    <property type="match status" value="1"/>
</dbReference>
<dbReference type="PANTHER" id="PTHR22914:SF9">
    <property type="entry name" value="CHITIN SYNTHASE 1"/>
    <property type="match status" value="1"/>
</dbReference>
<dbReference type="Pfam" id="PF01644">
    <property type="entry name" value="Chitin_synth_1"/>
    <property type="match status" value="1"/>
</dbReference>
<dbReference type="Pfam" id="PF08407">
    <property type="entry name" value="Chitin_synth_1N"/>
    <property type="match status" value="1"/>
</dbReference>
<dbReference type="SUPFAM" id="SSF53448">
    <property type="entry name" value="Nucleotide-diphospho-sugar transferases"/>
    <property type="match status" value="1"/>
</dbReference>
<keyword id="KW-0002">3D-structure</keyword>
<keyword id="KW-1003">Cell membrane</keyword>
<keyword id="KW-0961">Cell wall biogenesis/degradation</keyword>
<keyword id="KW-0328">Glycosyltransferase</keyword>
<keyword id="KW-0472">Membrane</keyword>
<keyword id="KW-0597">Phosphoprotein</keyword>
<keyword id="KW-1185">Reference proteome</keyword>
<keyword id="KW-0808">Transferase</keyword>
<keyword id="KW-0812">Transmembrane</keyword>
<keyword id="KW-1133">Transmembrane helix</keyword>
<sequence>MSDQNNRSRNEYHSNRKNEPSYELQNAHSGLFHSSNEELTNRNQRYTNQNASMGSFTPVQSLQFPEQSQQTNMLYNGDDGNNNTINDNERDIYGGFVNHHRQRPPPATAEYNDVFNTNSQQLPSEHQYNNVPSYPLPSINVIQTTPELIHNGSQTMATPIERPFFNENDYYYNNRNSRTSPSIASSSDGYADQEARPILEQPNNNMNSGNIPQYHDQPFGYNNGYHGLQAKDYYDDPEGGYIDQRGDDYQINSYLGRNGEMVDPYDYENSLRHMTPMERREYLHDDSRPVNDGKEELDSVKSGYSHRDLGEYDKDDFSRDDEYDDLNTIDKLQFQANGVPASSSVSSIGSKESDIIVSNDNLTANRALKRSGTEIRKFKLWNGNFVFDSPISKTLLDQYATTTENANTLPNEFKFMRYQAVTCEPNQLAEKNFTVRQLKYLTPRETELMLVVTMYNEDHILLGRTLKGIMDNVKYMVKKKNSSTWGPDAWKKIVVCIISDGRSKINERSLALLSSLGCYQDGFAKDEINEKKVAMHVYEHTTMINITNISESEVSLECNQGTVPIQLLFCLKEQNQKKINSHRWAFEGFAELLRPNIVTLLDAGTMPGKDSIYQLWREFRNPNVGGACGEIRTDLGKRFVKLLNPLVASQNFEYKMSNILDKTTESNFGFITVLPGAFSAYRFEAVRGQPLQKYFYGEIMENEGFHFFSSNMYLAEDRILCFEVVTKKNCNWILKYCRSSYASTDVPERVPEFILQRRRWLNGSFFASVYSFCHFYRVWSSGHNIGRKLLLTVEFFYLFFNTLISWFSLSSFFLVFRILTVSIALAYHSAFNVLSVIFLWLYGICTLSTFILSLGNKPKSTEKFYVLTCVIFAVMMIYMIFCSIFMSVKSFQNILKNDTISFEGLITTEAFRDIVISLGSTYCLYLISSIIYLQPWHMLTSFIQYILLSPSYINVLNIYAFCNVHDLSWGTKGAMANPLGKINTTEDGTFKMEVLVSSSEIQANYDKYLKVLNDFDPKSESRPTEPSYDEKKTGYYANVRSLVIIFWVITNFIIVAVVLETGGIADYIAMKSISTDDTLETAKKAEIPLMTSKASIYFNVILWLVALSALIRFIGCSIYMIVRFFKKVTFR</sequence>
<proteinExistence type="evidence at protein level"/>